<feature type="chain" id="PRO_1000022848" description="2-C-methyl-D-erythritol 2,4-cyclodiphosphate synthase">
    <location>
        <begin position="1"/>
        <end position="161"/>
    </location>
</feature>
<feature type="binding site" evidence="1">
    <location>
        <begin position="9"/>
        <end position="11"/>
    </location>
    <ligand>
        <name>4-CDP-2-C-methyl-D-erythritol 2-phosphate</name>
        <dbReference type="ChEBI" id="CHEBI:57919"/>
    </ligand>
</feature>
<feature type="binding site" evidence="1">
    <location>
        <position position="9"/>
    </location>
    <ligand>
        <name>a divalent metal cation</name>
        <dbReference type="ChEBI" id="CHEBI:60240"/>
    </ligand>
</feature>
<feature type="binding site" evidence="1">
    <location>
        <position position="11"/>
    </location>
    <ligand>
        <name>a divalent metal cation</name>
        <dbReference type="ChEBI" id="CHEBI:60240"/>
    </ligand>
</feature>
<feature type="binding site" evidence="1">
    <location>
        <begin position="37"/>
        <end position="38"/>
    </location>
    <ligand>
        <name>4-CDP-2-C-methyl-D-erythritol 2-phosphate</name>
        <dbReference type="ChEBI" id="CHEBI:57919"/>
    </ligand>
</feature>
<feature type="binding site" evidence="1">
    <location>
        <position position="45"/>
    </location>
    <ligand>
        <name>a divalent metal cation</name>
        <dbReference type="ChEBI" id="CHEBI:60240"/>
    </ligand>
</feature>
<feature type="binding site" evidence="1">
    <location>
        <begin position="59"/>
        <end position="61"/>
    </location>
    <ligand>
        <name>4-CDP-2-C-methyl-D-erythritol 2-phosphate</name>
        <dbReference type="ChEBI" id="CHEBI:57919"/>
    </ligand>
</feature>
<feature type="binding site" evidence="1">
    <location>
        <begin position="64"/>
        <end position="68"/>
    </location>
    <ligand>
        <name>4-CDP-2-C-methyl-D-erythritol 2-phosphate</name>
        <dbReference type="ChEBI" id="CHEBI:57919"/>
    </ligand>
</feature>
<feature type="binding site" evidence="1">
    <location>
        <begin position="135"/>
        <end position="138"/>
    </location>
    <ligand>
        <name>4-CDP-2-C-methyl-D-erythritol 2-phosphate</name>
        <dbReference type="ChEBI" id="CHEBI:57919"/>
    </ligand>
</feature>
<feature type="binding site" evidence="1">
    <location>
        <position position="145"/>
    </location>
    <ligand>
        <name>4-CDP-2-C-methyl-D-erythritol 2-phosphate</name>
        <dbReference type="ChEBI" id="CHEBI:57919"/>
    </ligand>
</feature>
<feature type="site" description="Transition state stabilizer" evidence="1">
    <location>
        <position position="37"/>
    </location>
</feature>
<feature type="site" description="Transition state stabilizer" evidence="1">
    <location>
        <position position="136"/>
    </location>
</feature>
<keyword id="KW-0414">Isoprene biosynthesis</keyword>
<keyword id="KW-0456">Lyase</keyword>
<keyword id="KW-0479">Metal-binding</keyword>
<evidence type="ECO:0000255" key="1">
    <source>
        <dbReference type="HAMAP-Rule" id="MF_00107"/>
    </source>
</evidence>
<reference key="1">
    <citation type="journal article" date="2006" name="Proc. Natl. Acad. Sci. U.S.A.">
        <title>Genome reduction in Leptospira borgpetersenii reflects limited transmission potential.</title>
        <authorList>
            <person name="Bulach D.M."/>
            <person name="Zuerner R.L."/>
            <person name="Wilson P."/>
            <person name="Seemann T."/>
            <person name="McGrath A."/>
            <person name="Cullen P.A."/>
            <person name="Davis J."/>
            <person name="Johnson M."/>
            <person name="Kuczek E."/>
            <person name="Alt D.P."/>
            <person name="Peterson-Burch B."/>
            <person name="Coppel R.L."/>
            <person name="Rood J.I."/>
            <person name="Davies J.K."/>
            <person name="Adler B."/>
        </authorList>
    </citation>
    <scope>NUCLEOTIDE SEQUENCE [LARGE SCALE GENOMIC DNA]</scope>
    <source>
        <strain>JB197</strain>
    </source>
</reference>
<sequence>MYRIGNGIDFHRLEINPNRPLVLGGVECESEVALVGHSDADIILHAISDAILGALALGDIGQYFPDTDPKLKNIDSKIILAKCLELMKERNFQLVNVDCTVIGEKPKIAPLKEKIKKSLCSLLDLPVDCVSVKATTTEKMGALGRQEGIGTFCTILLVKNL</sequence>
<name>ISPF_LEPBJ</name>
<comment type="function">
    <text evidence="1">Involved in the biosynthesis of isopentenyl diphosphate (IPP) and dimethylallyl diphosphate (DMAPP), two major building blocks of isoprenoid compounds. Catalyzes the conversion of 4-diphosphocytidyl-2-C-methyl-D-erythritol 2-phosphate (CDP-ME2P) to 2-C-methyl-D-erythritol 2,4-cyclodiphosphate (ME-CPP) with a corresponding release of cytidine 5-monophosphate (CMP).</text>
</comment>
<comment type="catalytic activity">
    <reaction evidence="1">
        <text>4-CDP-2-C-methyl-D-erythritol 2-phosphate = 2-C-methyl-D-erythritol 2,4-cyclic diphosphate + CMP</text>
        <dbReference type="Rhea" id="RHEA:23864"/>
        <dbReference type="ChEBI" id="CHEBI:57919"/>
        <dbReference type="ChEBI" id="CHEBI:58483"/>
        <dbReference type="ChEBI" id="CHEBI:60377"/>
        <dbReference type="EC" id="4.6.1.12"/>
    </reaction>
</comment>
<comment type="cofactor">
    <cofactor evidence="1">
        <name>a divalent metal cation</name>
        <dbReference type="ChEBI" id="CHEBI:60240"/>
    </cofactor>
    <text evidence="1">Binds 1 divalent metal cation per subunit.</text>
</comment>
<comment type="pathway">
    <text evidence="1">Isoprenoid biosynthesis; isopentenyl diphosphate biosynthesis via DXP pathway; isopentenyl diphosphate from 1-deoxy-D-xylulose 5-phosphate: step 4/6.</text>
</comment>
<comment type="subunit">
    <text evidence="1">Homotrimer.</text>
</comment>
<comment type="similarity">
    <text evidence="1">Belongs to the IspF family.</text>
</comment>
<gene>
    <name evidence="1" type="primary">ispF</name>
    <name type="ordered locus">LBJ_0323</name>
</gene>
<accession>Q04VM3</accession>
<organism>
    <name type="scientific">Leptospira borgpetersenii serovar Hardjo-bovis (strain JB197)</name>
    <dbReference type="NCBI Taxonomy" id="355277"/>
    <lineage>
        <taxon>Bacteria</taxon>
        <taxon>Pseudomonadati</taxon>
        <taxon>Spirochaetota</taxon>
        <taxon>Spirochaetia</taxon>
        <taxon>Leptospirales</taxon>
        <taxon>Leptospiraceae</taxon>
        <taxon>Leptospira</taxon>
    </lineage>
</organism>
<protein>
    <recommendedName>
        <fullName evidence="1">2-C-methyl-D-erythritol 2,4-cyclodiphosphate synthase</fullName>
        <shortName evidence="1">MECDP-synthase</shortName>
        <shortName evidence="1">MECPP-synthase</shortName>
        <shortName evidence="1">MECPS</shortName>
        <ecNumber evidence="1">4.6.1.12</ecNumber>
    </recommendedName>
</protein>
<dbReference type="EC" id="4.6.1.12" evidence="1"/>
<dbReference type="EMBL" id="CP000350">
    <property type="protein sequence ID" value="ABJ75047.1"/>
    <property type="molecule type" value="Genomic_DNA"/>
</dbReference>
<dbReference type="RefSeq" id="WP_011671022.1">
    <property type="nucleotide sequence ID" value="NC_008510.1"/>
</dbReference>
<dbReference type="SMR" id="Q04VM3"/>
<dbReference type="KEGG" id="lbj:LBJ_0323"/>
<dbReference type="HOGENOM" id="CLU_084630_2_0_12"/>
<dbReference type="UniPathway" id="UPA00056">
    <property type="reaction ID" value="UER00095"/>
</dbReference>
<dbReference type="Proteomes" id="UP000000656">
    <property type="component" value="Chromosome 1"/>
</dbReference>
<dbReference type="GO" id="GO:0008685">
    <property type="term" value="F:2-C-methyl-D-erythritol 2,4-cyclodiphosphate synthase activity"/>
    <property type="evidence" value="ECO:0007669"/>
    <property type="project" value="UniProtKB-UniRule"/>
</dbReference>
<dbReference type="GO" id="GO:0046872">
    <property type="term" value="F:metal ion binding"/>
    <property type="evidence" value="ECO:0007669"/>
    <property type="project" value="UniProtKB-KW"/>
</dbReference>
<dbReference type="GO" id="GO:0019288">
    <property type="term" value="P:isopentenyl diphosphate biosynthetic process, methylerythritol 4-phosphate pathway"/>
    <property type="evidence" value="ECO:0007669"/>
    <property type="project" value="UniProtKB-UniRule"/>
</dbReference>
<dbReference type="GO" id="GO:0016114">
    <property type="term" value="P:terpenoid biosynthetic process"/>
    <property type="evidence" value="ECO:0007669"/>
    <property type="project" value="InterPro"/>
</dbReference>
<dbReference type="CDD" id="cd00554">
    <property type="entry name" value="MECDP_synthase"/>
    <property type="match status" value="1"/>
</dbReference>
<dbReference type="FunFam" id="3.30.1330.50:FF:000003">
    <property type="entry name" value="2-C-methyl-D-erythritol 2,4-cyclodiphosphate synthase"/>
    <property type="match status" value="1"/>
</dbReference>
<dbReference type="Gene3D" id="3.30.1330.50">
    <property type="entry name" value="2-C-methyl-D-erythritol 2,4-cyclodiphosphate synthase"/>
    <property type="match status" value="1"/>
</dbReference>
<dbReference type="HAMAP" id="MF_00107">
    <property type="entry name" value="IspF"/>
    <property type="match status" value="1"/>
</dbReference>
<dbReference type="InterPro" id="IPR003526">
    <property type="entry name" value="MECDP_synthase"/>
</dbReference>
<dbReference type="InterPro" id="IPR020555">
    <property type="entry name" value="MECDP_synthase_CS"/>
</dbReference>
<dbReference type="InterPro" id="IPR036571">
    <property type="entry name" value="MECDP_synthase_sf"/>
</dbReference>
<dbReference type="NCBIfam" id="TIGR00151">
    <property type="entry name" value="ispF"/>
    <property type="match status" value="1"/>
</dbReference>
<dbReference type="PANTHER" id="PTHR43181">
    <property type="entry name" value="2-C-METHYL-D-ERYTHRITOL 2,4-CYCLODIPHOSPHATE SYNTHASE, CHLOROPLASTIC"/>
    <property type="match status" value="1"/>
</dbReference>
<dbReference type="PANTHER" id="PTHR43181:SF1">
    <property type="entry name" value="2-C-METHYL-D-ERYTHRITOL 2,4-CYCLODIPHOSPHATE SYNTHASE, CHLOROPLASTIC"/>
    <property type="match status" value="1"/>
</dbReference>
<dbReference type="Pfam" id="PF02542">
    <property type="entry name" value="YgbB"/>
    <property type="match status" value="1"/>
</dbReference>
<dbReference type="SUPFAM" id="SSF69765">
    <property type="entry name" value="IpsF-like"/>
    <property type="match status" value="1"/>
</dbReference>
<dbReference type="PROSITE" id="PS01350">
    <property type="entry name" value="ISPF"/>
    <property type="match status" value="1"/>
</dbReference>
<proteinExistence type="inferred from homology"/>